<keyword id="KW-0028">Amino-acid biosynthesis</keyword>
<keyword id="KW-0057">Aromatic amino acid biosynthesis</keyword>
<keyword id="KW-0963">Cytoplasm</keyword>
<keyword id="KW-0808">Transferase</keyword>
<feature type="chain" id="PRO_1000099761" description="3-phosphoshikimate 1-carboxyvinyltransferase">
    <location>
        <begin position="1"/>
        <end position="421"/>
    </location>
</feature>
<feature type="active site" description="Proton acceptor" evidence="1">
    <location>
        <position position="307"/>
    </location>
</feature>
<feature type="binding site" evidence="1">
    <location>
        <position position="19"/>
    </location>
    <ligand>
        <name>3-phosphoshikimate</name>
        <dbReference type="ChEBI" id="CHEBI:145989"/>
    </ligand>
</feature>
<feature type="binding site" evidence="1">
    <location>
        <position position="19"/>
    </location>
    <ligand>
        <name>phosphoenolpyruvate</name>
        <dbReference type="ChEBI" id="CHEBI:58702"/>
    </ligand>
</feature>
<feature type="binding site" evidence="1">
    <location>
        <position position="20"/>
    </location>
    <ligand>
        <name>3-phosphoshikimate</name>
        <dbReference type="ChEBI" id="CHEBI:145989"/>
    </ligand>
</feature>
<feature type="binding site" evidence="1">
    <location>
        <position position="24"/>
    </location>
    <ligand>
        <name>3-phosphoshikimate</name>
        <dbReference type="ChEBI" id="CHEBI:145989"/>
    </ligand>
</feature>
<feature type="binding site" evidence="1">
    <location>
        <position position="88"/>
    </location>
    <ligand>
        <name>phosphoenolpyruvate</name>
        <dbReference type="ChEBI" id="CHEBI:58702"/>
    </ligand>
</feature>
<feature type="binding site" evidence="1">
    <location>
        <position position="116"/>
    </location>
    <ligand>
        <name>phosphoenolpyruvate</name>
        <dbReference type="ChEBI" id="CHEBI:58702"/>
    </ligand>
</feature>
<feature type="binding site" evidence="1">
    <location>
        <position position="160"/>
    </location>
    <ligand>
        <name>3-phosphoshikimate</name>
        <dbReference type="ChEBI" id="CHEBI:145989"/>
    </ligand>
</feature>
<feature type="binding site" evidence="1">
    <location>
        <position position="162"/>
    </location>
    <ligand>
        <name>3-phosphoshikimate</name>
        <dbReference type="ChEBI" id="CHEBI:145989"/>
    </ligand>
</feature>
<feature type="binding site" evidence="1">
    <location>
        <position position="162"/>
    </location>
    <ligand>
        <name>phosphoenolpyruvate</name>
        <dbReference type="ChEBI" id="CHEBI:58702"/>
    </ligand>
</feature>
<feature type="binding site" evidence="1">
    <location>
        <position position="307"/>
    </location>
    <ligand>
        <name>3-phosphoshikimate</name>
        <dbReference type="ChEBI" id="CHEBI:145989"/>
    </ligand>
</feature>
<feature type="binding site" evidence="1">
    <location>
        <position position="334"/>
    </location>
    <ligand>
        <name>3-phosphoshikimate</name>
        <dbReference type="ChEBI" id="CHEBI:145989"/>
    </ligand>
</feature>
<feature type="binding site" evidence="1">
    <location>
        <position position="338"/>
    </location>
    <ligand>
        <name>phosphoenolpyruvate</name>
        <dbReference type="ChEBI" id="CHEBI:58702"/>
    </ligand>
</feature>
<feature type="binding site" evidence="1">
    <location>
        <position position="380"/>
    </location>
    <ligand>
        <name>phosphoenolpyruvate</name>
        <dbReference type="ChEBI" id="CHEBI:58702"/>
    </ligand>
</feature>
<evidence type="ECO:0000255" key="1">
    <source>
        <dbReference type="HAMAP-Rule" id="MF_00210"/>
    </source>
</evidence>
<dbReference type="EC" id="2.5.1.19" evidence="1"/>
<dbReference type="EMBL" id="CP000969">
    <property type="protein sequence ID" value="ACB08943.1"/>
    <property type="molecule type" value="Genomic_DNA"/>
</dbReference>
<dbReference type="RefSeq" id="WP_011943196.1">
    <property type="nucleotide sequence ID" value="NC_010483.1"/>
</dbReference>
<dbReference type="SMR" id="B1L9E5"/>
<dbReference type="KEGG" id="trq:TRQ2_0590"/>
<dbReference type="HOGENOM" id="CLU_024321_0_1_0"/>
<dbReference type="UniPathway" id="UPA00053">
    <property type="reaction ID" value="UER00089"/>
</dbReference>
<dbReference type="Proteomes" id="UP000001687">
    <property type="component" value="Chromosome"/>
</dbReference>
<dbReference type="GO" id="GO:0005737">
    <property type="term" value="C:cytoplasm"/>
    <property type="evidence" value="ECO:0007669"/>
    <property type="project" value="UniProtKB-SubCell"/>
</dbReference>
<dbReference type="GO" id="GO:0003866">
    <property type="term" value="F:3-phosphoshikimate 1-carboxyvinyltransferase activity"/>
    <property type="evidence" value="ECO:0007669"/>
    <property type="project" value="UniProtKB-UniRule"/>
</dbReference>
<dbReference type="GO" id="GO:0008652">
    <property type="term" value="P:amino acid biosynthetic process"/>
    <property type="evidence" value="ECO:0007669"/>
    <property type="project" value="UniProtKB-KW"/>
</dbReference>
<dbReference type="GO" id="GO:0009073">
    <property type="term" value="P:aromatic amino acid family biosynthetic process"/>
    <property type="evidence" value="ECO:0007669"/>
    <property type="project" value="UniProtKB-KW"/>
</dbReference>
<dbReference type="GO" id="GO:0009423">
    <property type="term" value="P:chorismate biosynthetic process"/>
    <property type="evidence" value="ECO:0007669"/>
    <property type="project" value="UniProtKB-UniRule"/>
</dbReference>
<dbReference type="CDD" id="cd01556">
    <property type="entry name" value="EPSP_synthase"/>
    <property type="match status" value="1"/>
</dbReference>
<dbReference type="FunFam" id="3.65.10.10:FF:000005">
    <property type="entry name" value="3-phosphoshikimate 1-carboxyvinyltransferase"/>
    <property type="match status" value="1"/>
</dbReference>
<dbReference type="FunFam" id="3.65.10.10:FF:000006">
    <property type="entry name" value="3-phosphoshikimate 1-carboxyvinyltransferase"/>
    <property type="match status" value="1"/>
</dbReference>
<dbReference type="Gene3D" id="3.65.10.10">
    <property type="entry name" value="Enolpyruvate transferase domain"/>
    <property type="match status" value="2"/>
</dbReference>
<dbReference type="HAMAP" id="MF_00210">
    <property type="entry name" value="EPSP_synth"/>
    <property type="match status" value="1"/>
</dbReference>
<dbReference type="InterPro" id="IPR001986">
    <property type="entry name" value="Enolpyruvate_Tfrase_dom"/>
</dbReference>
<dbReference type="InterPro" id="IPR036968">
    <property type="entry name" value="Enolpyruvate_Tfrase_sf"/>
</dbReference>
<dbReference type="InterPro" id="IPR006264">
    <property type="entry name" value="EPSP_synthase"/>
</dbReference>
<dbReference type="InterPro" id="IPR023193">
    <property type="entry name" value="EPSP_synthase_CS"/>
</dbReference>
<dbReference type="InterPro" id="IPR013792">
    <property type="entry name" value="RNA3'P_cycl/enolpyr_Trfase_a/b"/>
</dbReference>
<dbReference type="NCBIfam" id="TIGR01356">
    <property type="entry name" value="aroA"/>
    <property type="match status" value="1"/>
</dbReference>
<dbReference type="PANTHER" id="PTHR21090">
    <property type="entry name" value="AROM/DEHYDROQUINATE SYNTHASE"/>
    <property type="match status" value="1"/>
</dbReference>
<dbReference type="PANTHER" id="PTHR21090:SF5">
    <property type="entry name" value="PENTAFUNCTIONAL AROM POLYPEPTIDE"/>
    <property type="match status" value="1"/>
</dbReference>
<dbReference type="Pfam" id="PF00275">
    <property type="entry name" value="EPSP_synthase"/>
    <property type="match status" value="1"/>
</dbReference>
<dbReference type="PIRSF" id="PIRSF000505">
    <property type="entry name" value="EPSPS"/>
    <property type="match status" value="1"/>
</dbReference>
<dbReference type="SUPFAM" id="SSF55205">
    <property type="entry name" value="EPT/RTPC-like"/>
    <property type="match status" value="1"/>
</dbReference>
<dbReference type="PROSITE" id="PS00104">
    <property type="entry name" value="EPSP_SYNTHASE_1"/>
    <property type="match status" value="1"/>
</dbReference>
<dbReference type="PROSITE" id="PS00885">
    <property type="entry name" value="EPSP_SYNTHASE_2"/>
    <property type="match status" value="1"/>
</dbReference>
<proteinExistence type="inferred from homology"/>
<reference key="1">
    <citation type="journal article" date="2011" name="J. Bacteriol.">
        <title>Genome sequence of Thermotoga sp. strain RQ2, a hyperthermophilic bacterium isolated from a geothermally heated region of the seafloor near Ribeira Quente, the Azores.</title>
        <authorList>
            <person name="Swithers K.S."/>
            <person name="DiPippo J.L."/>
            <person name="Bruce D.C."/>
            <person name="Detter C."/>
            <person name="Tapia R."/>
            <person name="Han S."/>
            <person name="Saunders E."/>
            <person name="Goodwin L.A."/>
            <person name="Han J."/>
            <person name="Woyke T."/>
            <person name="Pitluck S."/>
            <person name="Pennacchio L."/>
            <person name="Nolan M."/>
            <person name="Mikhailova N."/>
            <person name="Lykidis A."/>
            <person name="Land M.L."/>
            <person name="Brettin T."/>
            <person name="Stetter K.O."/>
            <person name="Nelson K.E."/>
            <person name="Gogarten J.P."/>
            <person name="Noll K.M."/>
        </authorList>
    </citation>
    <scope>NUCLEOTIDE SEQUENCE [LARGE SCALE GENOMIC DNA]</scope>
    <source>
        <strain>RQ2</strain>
    </source>
</reference>
<comment type="function">
    <text evidence="1">Catalyzes the transfer of the enolpyruvyl moiety of phosphoenolpyruvate (PEP) to the 5-hydroxyl of shikimate-3-phosphate (S3P) to produce enolpyruvyl shikimate-3-phosphate and inorganic phosphate.</text>
</comment>
<comment type="catalytic activity">
    <reaction evidence="1">
        <text>3-phosphoshikimate + phosphoenolpyruvate = 5-O-(1-carboxyvinyl)-3-phosphoshikimate + phosphate</text>
        <dbReference type="Rhea" id="RHEA:21256"/>
        <dbReference type="ChEBI" id="CHEBI:43474"/>
        <dbReference type="ChEBI" id="CHEBI:57701"/>
        <dbReference type="ChEBI" id="CHEBI:58702"/>
        <dbReference type="ChEBI" id="CHEBI:145989"/>
        <dbReference type="EC" id="2.5.1.19"/>
    </reaction>
    <physiologicalReaction direction="left-to-right" evidence="1">
        <dbReference type="Rhea" id="RHEA:21257"/>
    </physiologicalReaction>
</comment>
<comment type="pathway">
    <text evidence="1">Metabolic intermediate biosynthesis; chorismate biosynthesis; chorismate from D-erythrose 4-phosphate and phosphoenolpyruvate: step 6/7.</text>
</comment>
<comment type="subunit">
    <text evidence="1">Monomer.</text>
</comment>
<comment type="subcellular location">
    <subcellularLocation>
        <location evidence="1">Cytoplasm</location>
    </subcellularLocation>
</comment>
<comment type="similarity">
    <text evidence="1">Belongs to the EPSP synthase family.</text>
</comment>
<organism>
    <name type="scientific">Thermotoga sp. (strain RQ2)</name>
    <dbReference type="NCBI Taxonomy" id="126740"/>
    <lineage>
        <taxon>Bacteria</taxon>
        <taxon>Thermotogati</taxon>
        <taxon>Thermotogota</taxon>
        <taxon>Thermotogae</taxon>
        <taxon>Thermotogales</taxon>
        <taxon>Thermotogaceae</taxon>
        <taxon>Thermotoga</taxon>
    </lineage>
</organism>
<name>AROA_THESQ</name>
<accession>B1L9E5</accession>
<sequence length="421" mass="46481">MKVLPAKKVEGVLSVPPDKSITHRALILSALAETESTLYNLLRCLDTERTHDILEKLGTRFEGDWEKMKVFPKPFAEPIEPLFCGNSGTTTRLMSGVLASYEMFTVLYGDSSLSRRPMRRVIEPLEMMGARFMARQNNYLPMAIKGNHLSGISYKTPVASAQVKSAVLLAGLRASGRTIVIEPAKSRDHTERMLKNLGVPVEVEGTRVVLEPATFRGFTMKVPGDISSAAFFVVLGAIHPNARITVTDVGLNPTRTGLLEVMKLMGANLEWEITEENLEPIGTVRVETSPNLKGVVVPEHLVPLMIDELPLVALLGVFAEGETVVRNAEELRKKESDRIRVLVENFKRLGVEIEEFKDGFKIVGKQSIKGGSVDPEGDHRMAMLFSIAGLVSEEGVDVKDHECVAVSFPNFYELLERVVIS</sequence>
<gene>
    <name evidence="1" type="primary">aroA</name>
    <name type="ordered locus">TRQ2_0590</name>
</gene>
<protein>
    <recommendedName>
        <fullName evidence="1">3-phosphoshikimate 1-carboxyvinyltransferase</fullName>
        <ecNumber evidence="1">2.5.1.19</ecNumber>
    </recommendedName>
    <alternativeName>
        <fullName evidence="1">5-enolpyruvylshikimate-3-phosphate synthase</fullName>
        <shortName evidence="1">EPSP synthase</shortName>
        <shortName evidence="1">EPSPS</shortName>
    </alternativeName>
</protein>